<protein>
    <recommendedName>
        <fullName evidence="1">Small ribosomal subunit protein uS10</fullName>
    </recommendedName>
    <alternativeName>
        <fullName evidence="2">30S ribosomal protein S10</fullName>
    </alternativeName>
</protein>
<evidence type="ECO:0000255" key="1">
    <source>
        <dbReference type="HAMAP-Rule" id="MF_00508"/>
    </source>
</evidence>
<evidence type="ECO:0000305" key="2"/>
<reference key="1">
    <citation type="journal article" date="1996" name="DNA Res.">
        <title>Sequence analysis of the genome of the unicellular cyanobacterium Synechocystis sp. strain PCC6803. II. Sequence determination of the entire genome and assignment of potential protein-coding regions.</title>
        <authorList>
            <person name="Kaneko T."/>
            <person name="Sato S."/>
            <person name="Kotani H."/>
            <person name="Tanaka A."/>
            <person name="Asamizu E."/>
            <person name="Nakamura Y."/>
            <person name="Miyajima N."/>
            <person name="Hirosawa M."/>
            <person name="Sugiura M."/>
            <person name="Sasamoto S."/>
            <person name="Kimura T."/>
            <person name="Hosouchi T."/>
            <person name="Matsuno A."/>
            <person name="Muraki A."/>
            <person name="Nakazaki N."/>
            <person name="Naruo K."/>
            <person name="Okumura S."/>
            <person name="Shimpo S."/>
            <person name="Takeuchi C."/>
            <person name="Wada T."/>
            <person name="Watanabe A."/>
            <person name="Yamada M."/>
            <person name="Yasuda M."/>
            <person name="Tabata S."/>
        </authorList>
    </citation>
    <scope>NUCLEOTIDE SEQUENCE [LARGE SCALE GENOMIC DNA]</scope>
    <source>
        <strain>ATCC 27184 / PCC 6803 / Kazusa</strain>
    </source>
</reference>
<organism>
    <name type="scientific">Synechocystis sp. (strain ATCC 27184 / PCC 6803 / Kazusa)</name>
    <dbReference type="NCBI Taxonomy" id="1111708"/>
    <lineage>
        <taxon>Bacteria</taxon>
        <taxon>Bacillati</taxon>
        <taxon>Cyanobacteriota</taxon>
        <taxon>Cyanophyceae</taxon>
        <taxon>Synechococcales</taxon>
        <taxon>Merismopediaceae</taxon>
        <taxon>Synechocystis</taxon>
    </lineage>
</organism>
<comment type="function">
    <text evidence="1">Involved in the binding of tRNA to the ribosomes.</text>
</comment>
<comment type="subunit">
    <text evidence="1">Part of the 30S ribosomal subunit.</text>
</comment>
<comment type="similarity">
    <text evidence="1">Belongs to the universal ribosomal protein uS10 family.</text>
</comment>
<sequence length="105" mass="12037">MATLQQQKIRIRLKAFDRRLLDTSCDKIVDTANRTNAAAVGPIPLPTKRKIYCVLRSPHVDKDSREHFETRTHRRIIDIYQPSSKTIDALMKLDLPAGVDIEVKL</sequence>
<accession>P74226</accession>
<keyword id="KW-1185">Reference proteome</keyword>
<keyword id="KW-0687">Ribonucleoprotein</keyword>
<keyword id="KW-0689">Ribosomal protein</keyword>
<dbReference type="EMBL" id="BA000022">
    <property type="protein sequence ID" value="BAA18320.1"/>
    <property type="molecule type" value="Genomic_DNA"/>
</dbReference>
<dbReference type="PIR" id="S75861">
    <property type="entry name" value="S75861"/>
</dbReference>
<dbReference type="SMR" id="P74226"/>
<dbReference type="FunCoup" id="P74226">
    <property type="interactions" value="512"/>
</dbReference>
<dbReference type="IntAct" id="P74226">
    <property type="interactions" value="2"/>
</dbReference>
<dbReference type="STRING" id="1148.gene:10499196"/>
<dbReference type="PaxDb" id="1148-1653406"/>
<dbReference type="EnsemblBacteria" id="BAA18320">
    <property type="protein sequence ID" value="BAA18320"/>
    <property type="gene ID" value="BAA18320"/>
</dbReference>
<dbReference type="KEGG" id="syn:sll1101"/>
<dbReference type="eggNOG" id="COG0051">
    <property type="taxonomic scope" value="Bacteria"/>
</dbReference>
<dbReference type="InParanoid" id="P74226"/>
<dbReference type="PhylomeDB" id="P74226"/>
<dbReference type="Proteomes" id="UP000001425">
    <property type="component" value="Chromosome"/>
</dbReference>
<dbReference type="GO" id="GO:0015935">
    <property type="term" value="C:small ribosomal subunit"/>
    <property type="evidence" value="ECO:0000318"/>
    <property type="project" value="GO_Central"/>
</dbReference>
<dbReference type="GO" id="GO:0003735">
    <property type="term" value="F:structural constituent of ribosome"/>
    <property type="evidence" value="ECO:0000318"/>
    <property type="project" value="GO_Central"/>
</dbReference>
<dbReference type="GO" id="GO:0000049">
    <property type="term" value="F:tRNA binding"/>
    <property type="evidence" value="ECO:0007669"/>
    <property type="project" value="UniProtKB-UniRule"/>
</dbReference>
<dbReference type="GO" id="GO:0006412">
    <property type="term" value="P:translation"/>
    <property type="evidence" value="ECO:0007669"/>
    <property type="project" value="UniProtKB-UniRule"/>
</dbReference>
<dbReference type="FunFam" id="3.30.70.600:FF:000001">
    <property type="entry name" value="30S ribosomal protein S10"/>
    <property type="match status" value="1"/>
</dbReference>
<dbReference type="Gene3D" id="3.30.70.600">
    <property type="entry name" value="Ribosomal protein S10 domain"/>
    <property type="match status" value="1"/>
</dbReference>
<dbReference type="HAMAP" id="MF_00508">
    <property type="entry name" value="Ribosomal_uS10"/>
    <property type="match status" value="1"/>
</dbReference>
<dbReference type="InterPro" id="IPR001848">
    <property type="entry name" value="Ribosomal_uS10"/>
</dbReference>
<dbReference type="InterPro" id="IPR018268">
    <property type="entry name" value="Ribosomal_uS10_CS"/>
</dbReference>
<dbReference type="InterPro" id="IPR027486">
    <property type="entry name" value="Ribosomal_uS10_dom"/>
</dbReference>
<dbReference type="InterPro" id="IPR036838">
    <property type="entry name" value="Ribosomal_uS10_dom_sf"/>
</dbReference>
<dbReference type="NCBIfam" id="NF001861">
    <property type="entry name" value="PRK00596.1"/>
    <property type="match status" value="1"/>
</dbReference>
<dbReference type="NCBIfam" id="TIGR01049">
    <property type="entry name" value="rpsJ_bact"/>
    <property type="match status" value="1"/>
</dbReference>
<dbReference type="PANTHER" id="PTHR11700">
    <property type="entry name" value="30S RIBOSOMAL PROTEIN S10 FAMILY MEMBER"/>
    <property type="match status" value="1"/>
</dbReference>
<dbReference type="Pfam" id="PF00338">
    <property type="entry name" value="Ribosomal_S10"/>
    <property type="match status" value="1"/>
</dbReference>
<dbReference type="PRINTS" id="PR00971">
    <property type="entry name" value="RIBOSOMALS10"/>
</dbReference>
<dbReference type="SMART" id="SM01403">
    <property type="entry name" value="Ribosomal_S10"/>
    <property type="match status" value="1"/>
</dbReference>
<dbReference type="SUPFAM" id="SSF54999">
    <property type="entry name" value="Ribosomal protein S10"/>
    <property type="match status" value="1"/>
</dbReference>
<dbReference type="PROSITE" id="PS00361">
    <property type="entry name" value="RIBOSOMAL_S10"/>
    <property type="match status" value="1"/>
</dbReference>
<name>RS10_SYNY3</name>
<proteinExistence type="inferred from homology"/>
<feature type="chain" id="PRO_0000146617" description="Small ribosomal subunit protein uS10">
    <location>
        <begin position="1"/>
        <end position="105"/>
    </location>
</feature>
<gene>
    <name evidence="1" type="primary">rpsJ</name>
    <name evidence="1" type="synonym">rps10</name>
    <name type="ordered locus">sll1101</name>
</gene>